<gene>
    <name evidence="1" type="primary">pstB3</name>
    <name type="ordered locus">SAG1963</name>
</gene>
<keyword id="KW-0067">ATP-binding</keyword>
<keyword id="KW-1003">Cell membrane</keyword>
<keyword id="KW-0472">Membrane</keyword>
<keyword id="KW-0547">Nucleotide-binding</keyword>
<keyword id="KW-0592">Phosphate transport</keyword>
<keyword id="KW-1185">Reference proteome</keyword>
<keyword id="KW-1278">Translocase</keyword>
<keyword id="KW-0813">Transport</keyword>
<name>PSTB3_STRA5</name>
<proteinExistence type="inferred from homology"/>
<protein>
    <recommendedName>
        <fullName evidence="1">Phosphate import ATP-binding protein PstB 3</fullName>
        <ecNumber evidence="1">7.3.2.1</ecNumber>
    </recommendedName>
    <alternativeName>
        <fullName evidence="1">ABC phosphate transporter 3</fullName>
    </alternativeName>
    <alternativeName>
        <fullName evidence="1">Phosphate-transporting ATPase 3</fullName>
    </alternativeName>
</protein>
<comment type="function">
    <text evidence="1">Part of the ABC transporter complex PstSACB involved in phosphate import. Responsible for energy coupling to the transport system.</text>
</comment>
<comment type="catalytic activity">
    <reaction evidence="1">
        <text>phosphate(out) + ATP + H2O = ADP + 2 phosphate(in) + H(+)</text>
        <dbReference type="Rhea" id="RHEA:24440"/>
        <dbReference type="ChEBI" id="CHEBI:15377"/>
        <dbReference type="ChEBI" id="CHEBI:15378"/>
        <dbReference type="ChEBI" id="CHEBI:30616"/>
        <dbReference type="ChEBI" id="CHEBI:43474"/>
        <dbReference type="ChEBI" id="CHEBI:456216"/>
        <dbReference type="EC" id="7.3.2.1"/>
    </reaction>
</comment>
<comment type="subunit">
    <text evidence="1">The complex is composed of two ATP-binding proteins (PstB), two transmembrane proteins (PstC and PstA) and a solute-binding protein (PstS).</text>
</comment>
<comment type="subcellular location">
    <subcellularLocation>
        <location evidence="1">Cell membrane</location>
        <topology evidence="1">Peripheral membrane protein</topology>
    </subcellularLocation>
</comment>
<comment type="similarity">
    <text evidence="1">Belongs to the ABC transporter superfamily. Phosphate importer (TC 3.A.1.7) family.</text>
</comment>
<accession>P63372</accession>
<accession>Q8DX90</accession>
<accession>Q8E313</accession>
<feature type="chain" id="PRO_0000092891" description="Phosphate import ATP-binding protein PstB 3">
    <location>
        <begin position="1"/>
        <end position="253"/>
    </location>
</feature>
<feature type="domain" description="ABC transporter" evidence="1">
    <location>
        <begin position="8"/>
        <end position="248"/>
    </location>
</feature>
<feature type="binding site" evidence="1">
    <location>
        <begin position="40"/>
        <end position="47"/>
    </location>
    <ligand>
        <name>ATP</name>
        <dbReference type="ChEBI" id="CHEBI:30616"/>
    </ligand>
</feature>
<organism>
    <name type="scientific">Streptococcus agalactiae serotype V (strain ATCC BAA-611 / 2603 V/R)</name>
    <dbReference type="NCBI Taxonomy" id="208435"/>
    <lineage>
        <taxon>Bacteria</taxon>
        <taxon>Bacillati</taxon>
        <taxon>Bacillota</taxon>
        <taxon>Bacilli</taxon>
        <taxon>Lactobacillales</taxon>
        <taxon>Streptococcaceae</taxon>
        <taxon>Streptococcus</taxon>
    </lineage>
</organism>
<sequence length="253" mass="28535">MSRTVSKLVINNLDLYYGEFHALKDVNLDIEEKEITAFIGPSGCGKSTLLKSINRMNDLVKNCKITGDITLEGEDVYRQLDINQLRKKVGMVFQKPNPFPMSIYDNVAFGPRTHGIHSKAELDDIVERSLKQAALWDEVKDRLHKSALGMSGGQQQRLCIARALAIEPDVLLMDEPTSALDPISTAKIEELVIQLKKNYTIVIVTHNMQQAVRISDKTAFFLMGEVVEYNKTSQLFSLPQDERTENYITGRFG</sequence>
<reference key="1">
    <citation type="journal article" date="2002" name="Proc. Natl. Acad. Sci. U.S.A.">
        <title>Complete genome sequence and comparative genomic analysis of an emerging human pathogen, serotype V Streptococcus agalactiae.</title>
        <authorList>
            <person name="Tettelin H."/>
            <person name="Masignani V."/>
            <person name="Cieslewicz M.J."/>
            <person name="Eisen J.A."/>
            <person name="Peterson S.N."/>
            <person name="Wessels M.R."/>
            <person name="Paulsen I.T."/>
            <person name="Nelson K.E."/>
            <person name="Margarit I."/>
            <person name="Read T.D."/>
            <person name="Madoff L.C."/>
            <person name="Wolf A.M."/>
            <person name="Beanan M.J."/>
            <person name="Brinkac L.M."/>
            <person name="Daugherty S.C."/>
            <person name="DeBoy R.T."/>
            <person name="Durkin A.S."/>
            <person name="Kolonay J.F."/>
            <person name="Madupu R."/>
            <person name="Lewis M.R."/>
            <person name="Radune D."/>
            <person name="Fedorova N.B."/>
            <person name="Scanlan D."/>
            <person name="Khouri H.M."/>
            <person name="Mulligan S."/>
            <person name="Carty H.A."/>
            <person name="Cline R.T."/>
            <person name="Van Aken S.E."/>
            <person name="Gill J."/>
            <person name="Scarselli M."/>
            <person name="Mora M."/>
            <person name="Iacobini E.T."/>
            <person name="Brettoni C."/>
            <person name="Galli G."/>
            <person name="Mariani M."/>
            <person name="Vegni F."/>
            <person name="Maione D."/>
            <person name="Rinaudo D."/>
            <person name="Rappuoli R."/>
            <person name="Telford J.L."/>
            <person name="Kasper D.L."/>
            <person name="Grandi G."/>
            <person name="Fraser C.M."/>
        </authorList>
    </citation>
    <scope>NUCLEOTIDE SEQUENCE [LARGE SCALE GENOMIC DNA]</scope>
    <source>
        <strain>ATCC BAA-611 / 2603 V/R</strain>
    </source>
</reference>
<evidence type="ECO:0000255" key="1">
    <source>
        <dbReference type="HAMAP-Rule" id="MF_01702"/>
    </source>
</evidence>
<dbReference type="EC" id="7.3.2.1" evidence="1"/>
<dbReference type="EMBL" id="AE009948">
    <property type="protein sequence ID" value="AAN00823.1"/>
    <property type="molecule type" value="Genomic_DNA"/>
</dbReference>
<dbReference type="RefSeq" id="NP_688950.1">
    <property type="nucleotide sequence ID" value="NC_004116.1"/>
</dbReference>
<dbReference type="SMR" id="P63372"/>
<dbReference type="STRING" id="208435.SAG1963"/>
<dbReference type="KEGG" id="sag:SAG1963"/>
<dbReference type="PATRIC" id="fig|208435.3.peg.1970"/>
<dbReference type="HOGENOM" id="CLU_000604_1_22_9"/>
<dbReference type="OrthoDB" id="9802185at2"/>
<dbReference type="Proteomes" id="UP000000821">
    <property type="component" value="Chromosome"/>
</dbReference>
<dbReference type="GO" id="GO:0005886">
    <property type="term" value="C:plasma membrane"/>
    <property type="evidence" value="ECO:0007669"/>
    <property type="project" value="UniProtKB-SubCell"/>
</dbReference>
<dbReference type="GO" id="GO:0005524">
    <property type="term" value="F:ATP binding"/>
    <property type="evidence" value="ECO:0007669"/>
    <property type="project" value="UniProtKB-KW"/>
</dbReference>
<dbReference type="GO" id="GO:0016887">
    <property type="term" value="F:ATP hydrolysis activity"/>
    <property type="evidence" value="ECO:0007669"/>
    <property type="project" value="InterPro"/>
</dbReference>
<dbReference type="GO" id="GO:0015415">
    <property type="term" value="F:ATPase-coupled phosphate ion transmembrane transporter activity"/>
    <property type="evidence" value="ECO:0007669"/>
    <property type="project" value="UniProtKB-EC"/>
</dbReference>
<dbReference type="GO" id="GO:0035435">
    <property type="term" value="P:phosphate ion transmembrane transport"/>
    <property type="evidence" value="ECO:0007669"/>
    <property type="project" value="InterPro"/>
</dbReference>
<dbReference type="CDD" id="cd03260">
    <property type="entry name" value="ABC_PstB_phosphate_transporter"/>
    <property type="match status" value="1"/>
</dbReference>
<dbReference type="FunFam" id="3.40.50.300:FF:000132">
    <property type="entry name" value="Phosphate import ATP-binding protein PstB"/>
    <property type="match status" value="1"/>
</dbReference>
<dbReference type="Gene3D" id="3.40.50.300">
    <property type="entry name" value="P-loop containing nucleotide triphosphate hydrolases"/>
    <property type="match status" value="1"/>
</dbReference>
<dbReference type="InterPro" id="IPR003593">
    <property type="entry name" value="AAA+_ATPase"/>
</dbReference>
<dbReference type="InterPro" id="IPR003439">
    <property type="entry name" value="ABC_transporter-like_ATP-bd"/>
</dbReference>
<dbReference type="InterPro" id="IPR017871">
    <property type="entry name" value="ABC_transporter-like_CS"/>
</dbReference>
<dbReference type="InterPro" id="IPR027417">
    <property type="entry name" value="P-loop_NTPase"/>
</dbReference>
<dbReference type="InterPro" id="IPR005670">
    <property type="entry name" value="PstB-like"/>
</dbReference>
<dbReference type="NCBIfam" id="TIGR00972">
    <property type="entry name" value="3a0107s01c2"/>
    <property type="match status" value="1"/>
</dbReference>
<dbReference type="PANTHER" id="PTHR43423">
    <property type="entry name" value="ABC TRANSPORTER I FAMILY MEMBER 17"/>
    <property type="match status" value="1"/>
</dbReference>
<dbReference type="PANTHER" id="PTHR43423:SF1">
    <property type="entry name" value="ABC TRANSPORTER I FAMILY MEMBER 17"/>
    <property type="match status" value="1"/>
</dbReference>
<dbReference type="Pfam" id="PF00005">
    <property type="entry name" value="ABC_tran"/>
    <property type="match status" value="1"/>
</dbReference>
<dbReference type="SMART" id="SM00382">
    <property type="entry name" value="AAA"/>
    <property type="match status" value="1"/>
</dbReference>
<dbReference type="SUPFAM" id="SSF52540">
    <property type="entry name" value="P-loop containing nucleoside triphosphate hydrolases"/>
    <property type="match status" value="1"/>
</dbReference>
<dbReference type="PROSITE" id="PS00211">
    <property type="entry name" value="ABC_TRANSPORTER_1"/>
    <property type="match status" value="1"/>
</dbReference>
<dbReference type="PROSITE" id="PS50893">
    <property type="entry name" value="ABC_TRANSPORTER_2"/>
    <property type="match status" value="1"/>
</dbReference>
<dbReference type="PROSITE" id="PS51238">
    <property type="entry name" value="PSTB"/>
    <property type="match status" value="1"/>
</dbReference>